<feature type="chain" id="PRO_0000142669" description="Nucleoprotein">
    <location>
        <begin position="1"/>
        <end position="551"/>
    </location>
</feature>
<feature type="region of interest" description="Ncore" evidence="3">
    <location>
        <begin position="1"/>
        <end position="404"/>
    </location>
</feature>
<feature type="region of interest" description="Ntail" evidence="3">
    <location>
        <begin position="405"/>
        <end position="551"/>
    </location>
</feature>
<feature type="region of interest" description="Disordered" evidence="5">
    <location>
        <begin position="509"/>
        <end position="551"/>
    </location>
</feature>
<feature type="compositionally biased region" description="Polar residues" evidence="5">
    <location>
        <begin position="509"/>
        <end position="523"/>
    </location>
</feature>
<feature type="compositionally biased region" description="Basic and acidic residues" evidence="5">
    <location>
        <begin position="524"/>
        <end position="538"/>
    </location>
</feature>
<feature type="binding site" evidence="1">
    <location>
        <position position="180"/>
    </location>
    <ligand>
        <name>RNA</name>
        <dbReference type="ChEBI" id="CHEBI:33697"/>
    </ligand>
</feature>
<feature type="binding site" evidence="1">
    <location>
        <position position="195"/>
    </location>
    <ligand>
        <name>RNA</name>
        <dbReference type="ChEBI" id="CHEBI:33697"/>
    </ligand>
</feature>
<feature type="binding site" evidence="1">
    <location>
        <position position="260"/>
    </location>
    <ligand>
        <name>RNA</name>
        <dbReference type="ChEBI" id="CHEBI:33697"/>
    </ligand>
</feature>
<feature type="binding site" evidence="1">
    <location>
        <position position="350"/>
    </location>
    <ligand>
        <name>RNA</name>
        <dbReference type="ChEBI" id="CHEBI:33697"/>
    </ligand>
</feature>
<feature type="binding site" evidence="1">
    <location>
        <position position="354"/>
    </location>
    <ligand>
        <name>RNA</name>
        <dbReference type="ChEBI" id="CHEBI:33697"/>
    </ligand>
</feature>
<gene>
    <name type="primary">N</name>
    <name type="synonym">NP</name>
</gene>
<dbReference type="EMBL" id="M32983">
    <property type="protein sequence ID" value="AAA46802.1"/>
    <property type="molecule type" value="mRNA"/>
</dbReference>
<dbReference type="PIR" id="B33772">
    <property type="entry name" value="VHNZ4B"/>
</dbReference>
<dbReference type="SMR" id="P17241"/>
<dbReference type="GO" id="GO:0019029">
    <property type="term" value="C:helical viral capsid"/>
    <property type="evidence" value="ECO:0007669"/>
    <property type="project" value="UniProtKB-KW"/>
</dbReference>
<dbReference type="GO" id="GO:0030430">
    <property type="term" value="C:host cell cytoplasm"/>
    <property type="evidence" value="ECO:0007669"/>
    <property type="project" value="UniProtKB-SubCell"/>
</dbReference>
<dbReference type="GO" id="GO:1990904">
    <property type="term" value="C:ribonucleoprotein complex"/>
    <property type="evidence" value="ECO:0007669"/>
    <property type="project" value="UniProtKB-KW"/>
</dbReference>
<dbReference type="GO" id="GO:0019013">
    <property type="term" value="C:viral nucleocapsid"/>
    <property type="evidence" value="ECO:0007669"/>
    <property type="project" value="UniProtKB-KW"/>
</dbReference>
<dbReference type="GO" id="GO:0003723">
    <property type="term" value="F:RNA binding"/>
    <property type="evidence" value="ECO:0007669"/>
    <property type="project" value="UniProtKB-KW"/>
</dbReference>
<dbReference type="GO" id="GO:0005198">
    <property type="term" value="F:structural molecule activity"/>
    <property type="evidence" value="ECO:0007669"/>
    <property type="project" value="InterPro"/>
</dbReference>
<dbReference type="InterPro" id="IPR002021">
    <property type="entry name" value="Paramyx_ncap"/>
</dbReference>
<dbReference type="Pfam" id="PF00973">
    <property type="entry name" value="Paramyxo_ncap"/>
    <property type="match status" value="1"/>
</dbReference>
<reference key="1">
    <citation type="journal article" date="1990" name="Virology">
        <title>Sequencing analyses and comparison of parainfluenza virus type 4A and 4B NP protein genes.</title>
        <authorList>
            <person name="Kondo K."/>
            <person name="Bando H."/>
            <person name="Kawano M."/>
            <person name="Tsurudome M."/>
            <person name="Komada H."/>
            <person name="Nishio M."/>
            <person name="Ito Y."/>
        </authorList>
    </citation>
    <scope>NUCLEOTIDE SEQUENCE [MRNA]</scope>
</reference>
<proteinExistence type="evidence at transcript level"/>
<name>NCAP_PI4HB</name>
<accession>P17241</accession>
<comment type="function">
    <text evidence="2 3">Forms the helical nucleocapsid (NC), protecting the genome from nucleases (By similarity). The encapsidated genomic RNA serves as template for transcription and replication; encapsidation by N is coupled to RNA synthesis. Forms the encapsidation complex with the phosphoprotein protein P. Before encapsidation, the newly synthesized free N protein, so-called N0, is chaperoned by P (By similarity).</text>
</comment>
<comment type="subunit">
    <text evidence="1 3 4">Homomultimer; forms the nucleocapsid (By similarity). Binds to the viral genomic RNA (By similarity). N0 interacts with the phosphoprotein (via N-terminus); this interaction allows P to chaperon N0 to avoid N polymerization before encapsidation. Interacts as N-RNA template with the phosphoprotein (via C-terminus); this interaction positions the polymerase on the template (By similarity).</text>
</comment>
<comment type="subcellular location">
    <subcellularLocation>
        <location evidence="6">Virion</location>
    </subcellularLocation>
    <subcellularLocation>
        <location>Host cytoplasm</location>
    </subcellularLocation>
</comment>
<comment type="domain">
    <text evidence="3">Ncore is globular and carries the regions required for self-assembly and RNA-binding. Ntail is an intrinsically disordered monomeric domain in the C-terminus.</text>
</comment>
<comment type="similarity">
    <text evidence="6">Belongs to the paramyxoviruses nucleocapsid family.</text>
</comment>
<evidence type="ECO:0000250" key="1">
    <source>
        <dbReference type="UniProtKB" id="O57286"/>
    </source>
</evidence>
<evidence type="ECO:0000250" key="2">
    <source>
        <dbReference type="UniProtKB" id="O89339"/>
    </source>
</evidence>
<evidence type="ECO:0000250" key="3">
    <source>
        <dbReference type="UniProtKB" id="P06159"/>
    </source>
</evidence>
<evidence type="ECO:0000250" key="4">
    <source>
        <dbReference type="UniProtKB" id="Q07097"/>
    </source>
</evidence>
<evidence type="ECO:0000256" key="5">
    <source>
        <dbReference type="SAM" id="MobiDB-lite"/>
    </source>
</evidence>
<evidence type="ECO:0000305" key="6"/>
<organism>
    <name type="scientific">Human parainfluenza 4b virus (strain 68-333)</name>
    <name type="common">HPIV-4b</name>
    <dbReference type="NCBI Taxonomy" id="11227"/>
    <lineage>
        <taxon>Viruses</taxon>
        <taxon>Riboviria</taxon>
        <taxon>Orthornavirae</taxon>
        <taxon>Negarnaviricota</taxon>
        <taxon>Haploviricotina</taxon>
        <taxon>Monjiviricetes</taxon>
        <taxon>Mononegavirales</taxon>
        <taxon>Paramyxoviridae</taxon>
        <taxon>Rubulavirinae</taxon>
        <taxon>Orthorubulavirus</taxon>
        <taxon>Orthorubulavirus hominis</taxon>
        <taxon>Human orthorubulavirus 4</taxon>
    </lineage>
</organism>
<protein>
    <recommendedName>
        <fullName>Nucleoprotein</fullName>
    </recommendedName>
    <alternativeName>
        <fullName>Nucleocapsid protein</fullName>
        <shortName>NP</shortName>
        <shortName>Protein N</shortName>
    </alternativeName>
</protein>
<sequence>MSSVLAAYEQFLQTTEDRSFGDQQFVQSDTLKAEIPVFVLNTNDPQQRFTLMNFCLRLAVSSSAKSAIKQGALLSLLSLQATSMQNHLMIAARAPDAALRIIEVDAIDPQDYTLTINPRSGWDDIKIRAYRALSRDLPISLADRTVFVSRDAEHAVCDDMDTYLNRIFSVLIQIWIMVCKCMTAYDQPTGSEERRLAKYKQQGRMLEKYQLQTDARKIIQLVIRESMVIRQFLVQEMLTADKVGAYTNRYYAMVGDIAKYIANVGMSAFFLTLKFGLGNRWKPLALAAFSGELVKLKSFMSLYRRLGDRSRYLALLESPELMEFAPANYPLLFSYAMGVGSVQDPLIRNYQFGRNFLNTSYFQYGVETAMKHQGTVDPKLALELGITDEDRVDIMQSVEKHISGKAGDDISQPAGAFTMSLSRSAFINNNTSQDFSGARLSNYEQGWSGTNQDETRDVYPESTMHRLQNIEPTDSDHNELLMPELESDSNPFNRPRFTVRAPLIPEISHQNPTTRMNRNINTRDNTRADHQDTNEDRGSNVPDDILGDLDN</sequence>
<keyword id="KW-0167">Capsid protein</keyword>
<keyword id="KW-1139">Helical capsid protein</keyword>
<keyword id="KW-1035">Host cytoplasm</keyword>
<keyword id="KW-0687">Ribonucleoprotein</keyword>
<keyword id="KW-0694">RNA-binding</keyword>
<keyword id="KW-0543">Viral nucleoprotein</keyword>
<keyword id="KW-0946">Virion</keyword>
<organismHost>
    <name type="scientific">Homo sapiens</name>
    <name type="common">Human</name>
    <dbReference type="NCBI Taxonomy" id="9606"/>
</organismHost>